<name>CHT_GIBZE</name>
<comment type="function">
    <text evidence="1 3">Catalyzes the hydration of cyanide to formamide. Degradation of cyanide may be important for plant pathogenic fungi in infection of cyanogenic plants.</text>
</comment>
<comment type="catalytic activity">
    <reaction evidence="1 3">
        <text>formamide = hydrogen cyanide + H2O</text>
        <dbReference type="Rhea" id="RHEA:21720"/>
        <dbReference type="ChEBI" id="CHEBI:15377"/>
        <dbReference type="ChEBI" id="CHEBI:16397"/>
        <dbReference type="ChEBI" id="CHEBI:18407"/>
        <dbReference type="EC" id="4.2.1.66"/>
    </reaction>
</comment>
<comment type="biophysicochemical properties">
    <phDependence>
        <text evidence="3">Optimum pH is 6-7. Active fom pH 6 to pH 8.5.</text>
    </phDependence>
</comment>
<comment type="subunit">
    <text evidence="1">Oligomer of dimers, forming left-handed helical fibers.</text>
</comment>
<comment type="induction">
    <text evidence="1">By cyanide.</text>
</comment>
<comment type="similarity">
    <text evidence="1">Belongs to the carbon-nitrogen hydrolase superfamily. Nitrilase family.</text>
</comment>
<gene>
    <name evidence="4" type="primary">cht</name>
    <name type="ORF">FGRAMPH1_01T18799</name>
    <name type="ORF">FGSG_05805</name>
</gene>
<organism>
    <name type="scientific">Gibberella zeae (strain ATCC MYA-4620 / CBS 123657 / FGSC 9075 / NRRL 31084 / PH-1)</name>
    <name type="common">Wheat head blight fungus</name>
    <name type="synonym">Fusarium graminearum</name>
    <dbReference type="NCBI Taxonomy" id="229533"/>
    <lineage>
        <taxon>Eukaryota</taxon>
        <taxon>Fungi</taxon>
        <taxon>Dikarya</taxon>
        <taxon>Ascomycota</taxon>
        <taxon>Pezizomycotina</taxon>
        <taxon>Sordariomycetes</taxon>
        <taxon>Hypocreomycetidae</taxon>
        <taxon>Hypocreales</taxon>
        <taxon>Nectriaceae</taxon>
        <taxon>Fusarium</taxon>
    </lineage>
</organism>
<sequence>MAITKYKAAAVTSEPGWFDLEGGVRKTIDFINEAGQAGCKFVAFPEVWIPGYPYWMWKVTYLQSLPMLKRYRENSMAVDSEEMRRIRRAARDNQIFVSLGFSEIDHATLYLSQVLIGPDGAVINHRRKIKPTHVEKLVYGDGAGDTFMSVSETEIGRVGQLNCWENMNPFLKSLNVSAGEQVHVAAWPVYPGKERQVYPDPATNYADPASDLVTPEYAIETGTWTLAPFQRLSVEGLKINTPEGVEPETDPSVYNGHARIYRPDGSLVVKPEKDFDGLLFVDIDLNECHLTKVLADFAGHYMRPDLIRLLVDTRRKELITEADPNGSIATYSTRQRLGLDKPLEKKEGEDTPDVL</sequence>
<protein>
    <recommendedName>
        <fullName evidence="1 4">Cyanide hydratase</fullName>
        <shortName evidence="1 4">CHT</shortName>
        <ecNumber evidence="1 3">4.2.1.66</ecNumber>
    </recommendedName>
    <alternativeName>
        <fullName evidence="1">Cyanide-degrading nitrilase</fullName>
    </alternativeName>
    <alternativeName>
        <fullName evidence="1">Formamide hydrolyase</fullName>
    </alternativeName>
</protein>
<proteinExistence type="evidence at protein level"/>
<feature type="chain" id="PRO_0000440033" description="Cyanide hydratase">
    <location>
        <begin position="1"/>
        <end position="355"/>
    </location>
</feature>
<feature type="domain" description="CN hydrolase" evidence="2">
    <location>
        <begin position="6"/>
        <end position="285"/>
    </location>
</feature>
<feature type="active site" description="Proton acceptor" evidence="2">
    <location>
        <position position="46"/>
    </location>
</feature>
<feature type="active site" evidence="2">
    <location>
        <position position="128"/>
    </location>
</feature>
<feature type="active site" description="Nucleophile" evidence="2">
    <location>
        <position position="163"/>
    </location>
</feature>
<keyword id="KW-0378">Hydrolase</keyword>
<keyword id="KW-0456">Lyase</keyword>
<keyword id="KW-1185">Reference proteome</keyword>
<reference key="1">
    <citation type="journal article" date="2007" name="Science">
        <title>The Fusarium graminearum genome reveals a link between localized polymorphism and pathogen specialization.</title>
        <authorList>
            <person name="Cuomo C.A."/>
            <person name="Gueldener U."/>
            <person name="Xu J.-R."/>
            <person name="Trail F."/>
            <person name="Turgeon B.G."/>
            <person name="Di Pietro A."/>
            <person name="Walton J.D."/>
            <person name="Ma L.-J."/>
            <person name="Baker S.E."/>
            <person name="Rep M."/>
            <person name="Adam G."/>
            <person name="Antoniw J."/>
            <person name="Baldwin T."/>
            <person name="Calvo S.E."/>
            <person name="Chang Y.-L."/>
            <person name="DeCaprio D."/>
            <person name="Gale L.R."/>
            <person name="Gnerre S."/>
            <person name="Goswami R.S."/>
            <person name="Hammond-Kosack K."/>
            <person name="Harris L.J."/>
            <person name="Hilburn K."/>
            <person name="Kennell J.C."/>
            <person name="Kroken S."/>
            <person name="Magnuson J.K."/>
            <person name="Mannhaupt G."/>
            <person name="Mauceli E.W."/>
            <person name="Mewes H.-W."/>
            <person name="Mitterbauer R."/>
            <person name="Muehlbauer G."/>
            <person name="Muensterkoetter M."/>
            <person name="Nelson D."/>
            <person name="O'Donnell K."/>
            <person name="Ouellet T."/>
            <person name="Qi W."/>
            <person name="Quesneville H."/>
            <person name="Roncero M.I.G."/>
            <person name="Seong K.-Y."/>
            <person name="Tetko I.V."/>
            <person name="Urban M."/>
            <person name="Waalwijk C."/>
            <person name="Ward T.J."/>
            <person name="Yao J."/>
            <person name="Birren B.W."/>
            <person name="Kistler H.C."/>
        </authorList>
    </citation>
    <scope>NUCLEOTIDE SEQUENCE [LARGE SCALE GENOMIC DNA]</scope>
    <source>
        <strain>ATCC MYA-4620 / CBS 123657 / FGSC 9075 / NRRL 31084 / PH-1</strain>
    </source>
</reference>
<reference key="2">
    <citation type="journal article" date="2010" name="Nature">
        <title>Comparative genomics reveals mobile pathogenicity chromosomes in Fusarium.</title>
        <authorList>
            <person name="Ma L.-J."/>
            <person name="van der Does H.C."/>
            <person name="Borkovich K.A."/>
            <person name="Coleman J.J."/>
            <person name="Daboussi M.-J."/>
            <person name="Di Pietro A."/>
            <person name="Dufresne M."/>
            <person name="Freitag M."/>
            <person name="Grabherr M."/>
            <person name="Henrissat B."/>
            <person name="Houterman P.M."/>
            <person name="Kang S."/>
            <person name="Shim W.-B."/>
            <person name="Woloshuk C."/>
            <person name="Xie X."/>
            <person name="Xu J.-R."/>
            <person name="Antoniw J."/>
            <person name="Baker S.E."/>
            <person name="Bluhm B.H."/>
            <person name="Breakspear A."/>
            <person name="Brown D.W."/>
            <person name="Butchko R.A.E."/>
            <person name="Chapman S."/>
            <person name="Coulson R."/>
            <person name="Coutinho P.M."/>
            <person name="Danchin E.G.J."/>
            <person name="Diener A."/>
            <person name="Gale L.R."/>
            <person name="Gardiner D.M."/>
            <person name="Goff S."/>
            <person name="Hammond-Kosack K.E."/>
            <person name="Hilburn K."/>
            <person name="Hua-Van A."/>
            <person name="Jonkers W."/>
            <person name="Kazan K."/>
            <person name="Kodira C.D."/>
            <person name="Koehrsen M."/>
            <person name="Kumar L."/>
            <person name="Lee Y.-H."/>
            <person name="Li L."/>
            <person name="Manners J.M."/>
            <person name="Miranda-Saavedra D."/>
            <person name="Mukherjee M."/>
            <person name="Park G."/>
            <person name="Park J."/>
            <person name="Park S.-Y."/>
            <person name="Proctor R.H."/>
            <person name="Regev A."/>
            <person name="Ruiz-Roldan M.C."/>
            <person name="Sain D."/>
            <person name="Sakthikumar S."/>
            <person name="Sykes S."/>
            <person name="Schwartz D.C."/>
            <person name="Turgeon B.G."/>
            <person name="Wapinski I."/>
            <person name="Yoder O."/>
            <person name="Young S."/>
            <person name="Zeng Q."/>
            <person name="Zhou S."/>
            <person name="Galagan J."/>
            <person name="Cuomo C.A."/>
            <person name="Kistler H.C."/>
            <person name="Rep M."/>
        </authorList>
    </citation>
    <scope>GENOME REANNOTATION</scope>
    <source>
        <strain>ATCC MYA-4620 / CBS 123657 / FGSC 9075 / NRRL 31084 / PH-1</strain>
    </source>
</reference>
<reference key="3">
    <citation type="journal article" date="2015" name="BMC Genomics">
        <title>The completed genome sequence of the pathogenic ascomycete fungus Fusarium graminearum.</title>
        <authorList>
            <person name="King R."/>
            <person name="Urban M."/>
            <person name="Hammond-Kosack M.C.U."/>
            <person name="Hassani-Pak K."/>
            <person name="Hammond-Kosack K.E."/>
        </authorList>
    </citation>
    <scope>NUCLEOTIDE SEQUENCE [LARGE SCALE GENOMIC DNA]</scope>
    <source>
        <strain>ATCC MYA-4620 / CBS 123657 / FGSC 9075 / NRRL 31084 / PH-1</strain>
    </source>
</reference>
<reference key="4">
    <citation type="journal article" date="2008" name="Appl. Microbiol. Biotechnol.">
        <title>Genome mining of cyanide-degrading nitrilases from filamentous fungi.</title>
        <authorList>
            <person name="Basile L.J."/>
            <person name="Willson R.C."/>
            <person name="Sewell B.T."/>
            <person name="Benedik M.J."/>
        </authorList>
    </citation>
    <scope>FUNCTION</scope>
    <scope>CATALYTIC ACTIVITY</scope>
    <scope>BIOPHYSICOCHEMICAL PROPERTIES</scope>
</reference>
<dbReference type="EC" id="4.2.1.66" evidence="1 3"/>
<dbReference type="EMBL" id="HG970334">
    <property type="protein sequence ID" value="CEF86019.1"/>
    <property type="molecule type" value="Genomic_DNA"/>
</dbReference>
<dbReference type="EMBL" id="DS231665">
    <property type="protein sequence ID" value="ESU11821.1"/>
    <property type="molecule type" value="Genomic_DNA"/>
</dbReference>
<dbReference type="RefSeq" id="XP_011324397.1">
    <property type="nucleotide sequence ID" value="XM_011326095.1"/>
</dbReference>
<dbReference type="SMR" id="I1RP53"/>
<dbReference type="STRING" id="229533.I1RP53"/>
<dbReference type="GeneID" id="23552966"/>
<dbReference type="KEGG" id="fgr:FGSG_05805"/>
<dbReference type="VEuPathDB" id="FungiDB:FGRAMPH1_01G18799"/>
<dbReference type="eggNOG" id="KOG0805">
    <property type="taxonomic scope" value="Eukaryota"/>
</dbReference>
<dbReference type="HOGENOM" id="CLU_030130_6_0_1"/>
<dbReference type="InParanoid" id="I1RP53"/>
<dbReference type="OrthoDB" id="23190at110618"/>
<dbReference type="Proteomes" id="UP000070720">
    <property type="component" value="Chromosome 3"/>
</dbReference>
<dbReference type="GO" id="GO:0030196">
    <property type="term" value="F:cyanide hydratase activity"/>
    <property type="evidence" value="ECO:0007669"/>
    <property type="project" value="UniProtKB-UniRule"/>
</dbReference>
<dbReference type="GO" id="GO:0000257">
    <property type="term" value="F:nitrilase activity"/>
    <property type="evidence" value="ECO:0007669"/>
    <property type="project" value="UniProtKB-ARBA"/>
</dbReference>
<dbReference type="GO" id="GO:0019500">
    <property type="term" value="P:cyanide catabolic process"/>
    <property type="evidence" value="ECO:0007669"/>
    <property type="project" value="UniProtKB-UniRule"/>
</dbReference>
<dbReference type="CDD" id="cd07564">
    <property type="entry name" value="nitrilases_CHs"/>
    <property type="match status" value="1"/>
</dbReference>
<dbReference type="FunFam" id="3.60.110.10:FF:000011">
    <property type="entry name" value="Cyanide hydratase"/>
    <property type="match status" value="1"/>
</dbReference>
<dbReference type="Gene3D" id="3.60.110.10">
    <property type="entry name" value="Carbon-nitrogen hydrolase"/>
    <property type="match status" value="1"/>
</dbReference>
<dbReference type="HAMAP" id="MF_03224">
    <property type="entry name" value="CN_hydrolase"/>
    <property type="match status" value="1"/>
</dbReference>
<dbReference type="InterPro" id="IPR003010">
    <property type="entry name" value="C-N_Hydrolase"/>
</dbReference>
<dbReference type="InterPro" id="IPR036526">
    <property type="entry name" value="C-N_Hydrolase_sf"/>
</dbReference>
<dbReference type="InterPro" id="IPR037544">
    <property type="entry name" value="CN_hydrolase"/>
</dbReference>
<dbReference type="InterPro" id="IPR000132">
    <property type="entry name" value="Nitrilase/CN_hydratase_CS"/>
</dbReference>
<dbReference type="InterPro" id="IPR044149">
    <property type="entry name" value="Nitrilases_CHs"/>
</dbReference>
<dbReference type="PANTHER" id="PTHR46044:SF4">
    <property type="entry name" value="CYANIDE HYDRATASE"/>
    <property type="match status" value="1"/>
</dbReference>
<dbReference type="PANTHER" id="PTHR46044">
    <property type="entry name" value="NITRILASE"/>
    <property type="match status" value="1"/>
</dbReference>
<dbReference type="Pfam" id="PF00795">
    <property type="entry name" value="CN_hydrolase"/>
    <property type="match status" value="1"/>
</dbReference>
<dbReference type="SUPFAM" id="SSF56317">
    <property type="entry name" value="Carbon-nitrogen hydrolase"/>
    <property type="match status" value="1"/>
</dbReference>
<dbReference type="PROSITE" id="PS50263">
    <property type="entry name" value="CN_HYDROLASE"/>
    <property type="match status" value="1"/>
</dbReference>
<dbReference type="PROSITE" id="PS00920">
    <property type="entry name" value="NITRIL_CHT_1"/>
    <property type="match status" value="1"/>
</dbReference>
<dbReference type="PROSITE" id="PS00921">
    <property type="entry name" value="NITRIL_CHT_2"/>
    <property type="match status" value="1"/>
</dbReference>
<evidence type="ECO:0000255" key="1">
    <source>
        <dbReference type="HAMAP-Rule" id="MF_03224"/>
    </source>
</evidence>
<evidence type="ECO:0000255" key="2">
    <source>
        <dbReference type="PROSITE-ProRule" id="PRU00054"/>
    </source>
</evidence>
<evidence type="ECO:0000269" key="3">
    <source>
    </source>
</evidence>
<evidence type="ECO:0000303" key="4">
    <source>
    </source>
</evidence>
<accession>I1RP53</accession>